<feature type="chain" id="PRO_0000206852" description="Magnesium-chelatase 60 kDa subunit">
    <location>
        <begin position="1"/>
        <end position="561"/>
    </location>
</feature>
<feature type="domain" description="VWFA" evidence="1">
    <location>
        <begin position="379"/>
        <end position="559"/>
    </location>
</feature>
<feature type="region of interest" description="Disordered" evidence="2">
    <location>
        <begin position="234"/>
        <end position="268"/>
    </location>
</feature>
<feature type="region of interest" description="Disordered" evidence="2">
    <location>
        <begin position="298"/>
        <end position="324"/>
    </location>
</feature>
<feature type="compositionally biased region" description="Pro residues" evidence="2">
    <location>
        <begin position="237"/>
        <end position="249"/>
    </location>
</feature>
<feature type="compositionally biased region" description="Acidic residues" evidence="2">
    <location>
        <begin position="250"/>
        <end position="265"/>
    </location>
</feature>
<feature type="compositionally biased region" description="Basic residues" evidence="2">
    <location>
        <begin position="314"/>
        <end position="323"/>
    </location>
</feature>
<proteinExistence type="evidence at protein level"/>
<protein>
    <recommendedName>
        <fullName>Magnesium-chelatase 60 kDa subunit</fullName>
        <shortName>Mg-chelatase subunit D</shortName>
        <ecNumber>6.6.1.1</ecNumber>
    </recommendedName>
    <alternativeName>
        <fullName>Mg-protoporphyrin IX chelatase</fullName>
    </alternativeName>
</protein>
<name>BCHD_RHOCB</name>
<accession>P26175</accession>
<accession>D5ANT7</accession>
<comment type="function">
    <text>Involved in bacteriochlorophyll biosynthesis; introduces a magnesium ion into protoporphyrin IX to yield Mg-protoporphyrin IX.</text>
</comment>
<comment type="catalytic activity">
    <reaction>
        <text>protoporphyrin IX + Mg(2+) + ATP + H2O = Mg-protoporphyrin IX + ADP + phosphate + 3 H(+)</text>
        <dbReference type="Rhea" id="RHEA:13961"/>
        <dbReference type="ChEBI" id="CHEBI:15377"/>
        <dbReference type="ChEBI" id="CHEBI:15378"/>
        <dbReference type="ChEBI" id="CHEBI:18420"/>
        <dbReference type="ChEBI" id="CHEBI:30616"/>
        <dbReference type="ChEBI" id="CHEBI:43474"/>
        <dbReference type="ChEBI" id="CHEBI:57306"/>
        <dbReference type="ChEBI" id="CHEBI:60492"/>
        <dbReference type="ChEBI" id="CHEBI:456216"/>
        <dbReference type="EC" id="6.6.1.1"/>
    </reaction>
</comment>
<comment type="pathway">
    <text>Porphyrin-containing compound metabolism; bacteriochlorophyll biosynthesis.</text>
</comment>
<comment type="interaction">
    <interactant intactId="EBI-8453255">
        <id>P26175</id>
    </interactant>
    <interactant intactId="EBI-8453273">
        <id>P26239</id>
        <label>bchI</label>
    </interactant>
    <organismsDiffer>false</organismsDiffer>
    <experiments>5</experiments>
</comment>
<comment type="similarity">
    <text evidence="3">Belongs to the Mg-chelatase subunits D/I family.</text>
</comment>
<sequence>MDHERLKSALAVLTVDPAAVGGLWLRSRAGPIRLAFTDTLAKLPFPMALRRLPPNVDDGALYGGLDVAETLHSGKPVLKGGLLDRPSVFILPMAERCTAKLGARLAQALDLRQHALIALDEAAEPDEALPHAVADRLGLFVDLSEVRSIDGPGLLPETAQIERARELLPQVQMPAERVSEIVEGCRQLGISSLRAPMLALTAARILTALSGRTRVEAEDVLHAAELTLAHRALPLQEAPPPPPPPPEPPEPNEGENQQDEQDQIDPLDGIPPEIVVEAVRAMLPDNILQTLNMGSRLRAASGGQGAGQEQIGNRRGRPLPSRKGKLEDDAKIDLVATLRSAAPWQGLRRRQAPAGTERVLLVESSDIHIKRRKEMSDRVLIFAVDASGSAAVARLSEAKGAVELLLGRAYAARDHVSLITFRGTAAQVLLQPSRSLTQTKRQLQGLPGGGGTPLASGMEMAMVTAKQARSRGMTPTIALLTDGRGNIALDGTANRELAGEQATKVARAIRASGMPAVIIDTAMRPNPALVDLARTMDAHYIALPRATAHKMADVLGAALEA</sequence>
<keyword id="KW-0002">3D-structure</keyword>
<keyword id="KW-0067">ATP-binding</keyword>
<keyword id="KW-0077">Bacteriochlorophyll biosynthesis</keyword>
<keyword id="KW-0149">Chlorophyll biosynthesis</keyword>
<keyword id="KW-0436">Ligase</keyword>
<keyword id="KW-0547">Nucleotide-binding</keyword>
<keyword id="KW-0602">Photosynthesis</keyword>
<keyword id="KW-1185">Reference proteome</keyword>
<organism>
    <name type="scientific">Rhodobacter capsulatus (strain ATCC BAA-309 / NBRC 16581 / SB1003)</name>
    <dbReference type="NCBI Taxonomy" id="272942"/>
    <lineage>
        <taxon>Bacteria</taxon>
        <taxon>Pseudomonadati</taxon>
        <taxon>Pseudomonadota</taxon>
        <taxon>Alphaproteobacteria</taxon>
        <taxon>Rhodobacterales</taxon>
        <taxon>Rhodobacter group</taxon>
        <taxon>Rhodobacter</taxon>
    </lineage>
</organism>
<dbReference type="EC" id="6.6.1.1"/>
<dbReference type="EMBL" id="Z11165">
    <property type="protein sequence ID" value="CAA77537.1"/>
    <property type="molecule type" value="Genomic_DNA"/>
</dbReference>
<dbReference type="EMBL" id="CP001312">
    <property type="protein sequence ID" value="ADE84441.1"/>
    <property type="molecule type" value="Genomic_DNA"/>
</dbReference>
<dbReference type="PIR" id="S17821">
    <property type="entry name" value="S17821"/>
</dbReference>
<dbReference type="RefSeq" id="WP_013066420.1">
    <property type="nucleotide sequence ID" value="NC_014034.1"/>
</dbReference>
<dbReference type="PDB" id="2X31">
    <property type="method" value="EM"/>
    <property type="resolution" value="7.50 A"/>
    <property type="chains" value="A/B/C/D/E/F=373-561"/>
</dbReference>
<dbReference type="PDBsum" id="2X31"/>
<dbReference type="SMR" id="P26175"/>
<dbReference type="DIP" id="DIP-58975N"/>
<dbReference type="IntAct" id="P26175">
    <property type="interactions" value="4"/>
</dbReference>
<dbReference type="MINT" id="P26175"/>
<dbReference type="STRING" id="272942.RCAP_rcc00676"/>
<dbReference type="GeneID" id="31489622"/>
<dbReference type="KEGG" id="rcp:RCAP_rcc00676"/>
<dbReference type="eggNOG" id="COG1240">
    <property type="taxonomic scope" value="Bacteria"/>
</dbReference>
<dbReference type="HOGENOM" id="CLU_016684_6_2_5"/>
<dbReference type="OrthoDB" id="9775079at2"/>
<dbReference type="UniPathway" id="UPA00669"/>
<dbReference type="EvolutionaryTrace" id="P26175"/>
<dbReference type="Proteomes" id="UP000002361">
    <property type="component" value="Chromosome"/>
</dbReference>
<dbReference type="GO" id="GO:0005524">
    <property type="term" value="F:ATP binding"/>
    <property type="evidence" value="ECO:0007669"/>
    <property type="project" value="UniProtKB-KW"/>
</dbReference>
<dbReference type="GO" id="GO:0016851">
    <property type="term" value="F:magnesium chelatase activity"/>
    <property type="evidence" value="ECO:0007669"/>
    <property type="project" value="UniProtKB-EC"/>
</dbReference>
<dbReference type="GO" id="GO:0030494">
    <property type="term" value="P:bacteriochlorophyll biosynthetic process"/>
    <property type="evidence" value="ECO:0007669"/>
    <property type="project" value="UniProtKB-UniPathway"/>
</dbReference>
<dbReference type="GO" id="GO:0015979">
    <property type="term" value="P:photosynthesis"/>
    <property type="evidence" value="ECO:0007669"/>
    <property type="project" value="UniProtKB-KW"/>
</dbReference>
<dbReference type="CDD" id="cd01451">
    <property type="entry name" value="vWA_Magnesium_chelatase"/>
    <property type="match status" value="1"/>
</dbReference>
<dbReference type="Gene3D" id="1.10.8.80">
    <property type="entry name" value="Magnesium chelatase subunit I, C-Terminal domain"/>
    <property type="match status" value="1"/>
</dbReference>
<dbReference type="Gene3D" id="3.40.50.410">
    <property type="entry name" value="von Willebrand factor, type A domain"/>
    <property type="match status" value="1"/>
</dbReference>
<dbReference type="InterPro" id="IPR041702">
    <property type="entry name" value="BchD/ChlD_VWA"/>
</dbReference>
<dbReference type="InterPro" id="IPR041628">
    <property type="entry name" value="ChlI/MoxR_AAA_lid"/>
</dbReference>
<dbReference type="InterPro" id="IPR011776">
    <property type="entry name" value="Mg_chelatase_ATPase-dsu"/>
</dbReference>
<dbReference type="InterPro" id="IPR027417">
    <property type="entry name" value="P-loop_NTPase"/>
</dbReference>
<dbReference type="InterPro" id="IPR002035">
    <property type="entry name" value="VWF_A"/>
</dbReference>
<dbReference type="InterPro" id="IPR036465">
    <property type="entry name" value="vWFA_dom_sf"/>
</dbReference>
<dbReference type="NCBIfam" id="TIGR02031">
    <property type="entry name" value="BchD-ChlD"/>
    <property type="match status" value="1"/>
</dbReference>
<dbReference type="NCBIfam" id="NF009943">
    <property type="entry name" value="PRK13406.1"/>
    <property type="match status" value="1"/>
</dbReference>
<dbReference type="PANTHER" id="PTHR43473">
    <property type="entry name" value="MAGNESIUM-CHELATASE SUBUNIT CHLD, CHLOROPLASTIC"/>
    <property type="match status" value="1"/>
</dbReference>
<dbReference type="PANTHER" id="PTHR43473:SF2">
    <property type="entry name" value="MAGNESIUM-CHELATASE SUBUNIT CHLD, CHLOROPLASTIC"/>
    <property type="match status" value="1"/>
</dbReference>
<dbReference type="Pfam" id="PF17863">
    <property type="entry name" value="AAA_lid_2"/>
    <property type="match status" value="1"/>
</dbReference>
<dbReference type="Pfam" id="PF13519">
    <property type="entry name" value="VWA_2"/>
    <property type="match status" value="1"/>
</dbReference>
<dbReference type="SMART" id="SM00327">
    <property type="entry name" value="VWA"/>
    <property type="match status" value="1"/>
</dbReference>
<dbReference type="SUPFAM" id="SSF52540">
    <property type="entry name" value="P-loop containing nucleoside triphosphate hydrolases"/>
    <property type="match status" value="1"/>
</dbReference>
<dbReference type="SUPFAM" id="SSF53300">
    <property type="entry name" value="vWA-like"/>
    <property type="match status" value="1"/>
</dbReference>
<dbReference type="PROSITE" id="PS50234">
    <property type="entry name" value="VWFA"/>
    <property type="match status" value="1"/>
</dbReference>
<evidence type="ECO:0000255" key="1">
    <source>
        <dbReference type="PROSITE-ProRule" id="PRU00219"/>
    </source>
</evidence>
<evidence type="ECO:0000256" key="2">
    <source>
        <dbReference type="SAM" id="MobiDB-lite"/>
    </source>
</evidence>
<evidence type="ECO:0000305" key="3"/>
<gene>
    <name type="primary">bchD</name>
    <name type="ordered locus">RCAP_rcc00676</name>
</gene>
<reference key="1">
    <citation type="submission" date="1991-11" db="EMBL/GenBank/DDBJ databases">
        <authorList>
            <person name="Burke D.H."/>
            <person name="Alberti M."/>
            <person name="Armstrong G.A."/>
            <person name="Hearst J.E."/>
        </authorList>
    </citation>
    <scope>NUCLEOTIDE SEQUENCE [GENOMIC DNA]</scope>
    <source>
        <strain>ATCC BAA-309 / NBRC 16581 / SB1003</strain>
    </source>
</reference>
<reference key="2">
    <citation type="journal article" date="2010" name="J. Bacteriol.">
        <title>Complete genome sequence of the photosynthetic purple nonsulfur bacterium Rhodobacter capsulatus SB 1003.</title>
        <authorList>
            <person name="Strnad H."/>
            <person name="Lapidus A."/>
            <person name="Paces J."/>
            <person name="Ulbrich P."/>
            <person name="Vlcek C."/>
            <person name="Paces V."/>
            <person name="Haselkorn R."/>
        </authorList>
    </citation>
    <scope>NUCLEOTIDE SEQUENCE [LARGE SCALE GENOMIC DNA]</scope>
    <source>
        <strain>ATCC BAA-309 / NBRC 16581 / SB1003</strain>
    </source>
</reference>